<feature type="chain" id="PRO_0000153302" description="Histidinol-phosphate aminotransferase 2">
    <location>
        <begin position="1"/>
        <end position="366"/>
    </location>
</feature>
<feature type="region of interest" description="Disordered" evidence="2">
    <location>
        <begin position="1"/>
        <end position="21"/>
    </location>
</feature>
<feature type="compositionally biased region" description="Polar residues" evidence="2">
    <location>
        <begin position="1"/>
        <end position="11"/>
    </location>
</feature>
<feature type="modified residue" description="N6-(pyridoxal phosphate)lysine" evidence="1">
    <location>
        <position position="222"/>
    </location>
</feature>
<dbReference type="EC" id="2.6.1.9"/>
<dbReference type="EMBL" id="AE016877">
    <property type="protein sequence ID" value="AAP09888.1"/>
    <property type="molecule type" value="Genomic_DNA"/>
</dbReference>
<dbReference type="RefSeq" id="NP_832687.1">
    <property type="nucleotide sequence ID" value="NC_004722.1"/>
</dbReference>
<dbReference type="RefSeq" id="WP_001197251.1">
    <property type="nucleotide sequence ID" value="NC_004722.1"/>
</dbReference>
<dbReference type="SMR" id="Q81C43"/>
<dbReference type="STRING" id="226900.BC_2940"/>
<dbReference type="KEGG" id="bce:BC2940"/>
<dbReference type="PATRIC" id="fig|226900.8.peg.3015"/>
<dbReference type="HOGENOM" id="CLU_017584_3_3_9"/>
<dbReference type="OrthoDB" id="9813612at2"/>
<dbReference type="UniPathway" id="UPA00031">
    <property type="reaction ID" value="UER00012"/>
</dbReference>
<dbReference type="Proteomes" id="UP000001417">
    <property type="component" value="Chromosome"/>
</dbReference>
<dbReference type="GO" id="GO:0004400">
    <property type="term" value="F:histidinol-phosphate transaminase activity"/>
    <property type="evidence" value="ECO:0007669"/>
    <property type="project" value="UniProtKB-UniRule"/>
</dbReference>
<dbReference type="GO" id="GO:0030170">
    <property type="term" value="F:pyridoxal phosphate binding"/>
    <property type="evidence" value="ECO:0007669"/>
    <property type="project" value="InterPro"/>
</dbReference>
<dbReference type="GO" id="GO:0000105">
    <property type="term" value="P:L-histidine biosynthetic process"/>
    <property type="evidence" value="ECO:0007669"/>
    <property type="project" value="UniProtKB-UniRule"/>
</dbReference>
<dbReference type="CDD" id="cd00609">
    <property type="entry name" value="AAT_like"/>
    <property type="match status" value="1"/>
</dbReference>
<dbReference type="Gene3D" id="3.90.1150.10">
    <property type="entry name" value="Aspartate Aminotransferase, domain 1"/>
    <property type="match status" value="1"/>
</dbReference>
<dbReference type="Gene3D" id="3.40.640.10">
    <property type="entry name" value="Type I PLP-dependent aspartate aminotransferase-like (Major domain)"/>
    <property type="match status" value="1"/>
</dbReference>
<dbReference type="HAMAP" id="MF_01023">
    <property type="entry name" value="HisC_aminotrans_2"/>
    <property type="match status" value="1"/>
</dbReference>
<dbReference type="InterPro" id="IPR001917">
    <property type="entry name" value="Aminotrans_II_pyridoxalP_BS"/>
</dbReference>
<dbReference type="InterPro" id="IPR004839">
    <property type="entry name" value="Aminotransferase_I/II_large"/>
</dbReference>
<dbReference type="InterPro" id="IPR005861">
    <property type="entry name" value="HisP_aminotrans"/>
</dbReference>
<dbReference type="InterPro" id="IPR050106">
    <property type="entry name" value="HistidinolP_aminotransfase"/>
</dbReference>
<dbReference type="InterPro" id="IPR015424">
    <property type="entry name" value="PyrdxlP-dep_Trfase"/>
</dbReference>
<dbReference type="InterPro" id="IPR015421">
    <property type="entry name" value="PyrdxlP-dep_Trfase_major"/>
</dbReference>
<dbReference type="InterPro" id="IPR015422">
    <property type="entry name" value="PyrdxlP-dep_Trfase_small"/>
</dbReference>
<dbReference type="NCBIfam" id="TIGR01141">
    <property type="entry name" value="hisC"/>
    <property type="match status" value="1"/>
</dbReference>
<dbReference type="PANTHER" id="PTHR43643:SF3">
    <property type="entry name" value="HISTIDINOL-PHOSPHATE AMINOTRANSFERASE"/>
    <property type="match status" value="1"/>
</dbReference>
<dbReference type="PANTHER" id="PTHR43643">
    <property type="entry name" value="HISTIDINOL-PHOSPHATE AMINOTRANSFERASE 2"/>
    <property type="match status" value="1"/>
</dbReference>
<dbReference type="Pfam" id="PF00155">
    <property type="entry name" value="Aminotran_1_2"/>
    <property type="match status" value="1"/>
</dbReference>
<dbReference type="SUPFAM" id="SSF53383">
    <property type="entry name" value="PLP-dependent transferases"/>
    <property type="match status" value="1"/>
</dbReference>
<dbReference type="PROSITE" id="PS00599">
    <property type="entry name" value="AA_TRANSFER_CLASS_2"/>
    <property type="match status" value="1"/>
</dbReference>
<gene>
    <name type="primary">hisC2</name>
    <name type="ordered locus">BC_2940</name>
</gene>
<evidence type="ECO:0000250" key="1"/>
<evidence type="ECO:0000256" key="2">
    <source>
        <dbReference type="SAM" id="MobiDB-lite"/>
    </source>
</evidence>
<evidence type="ECO:0000305" key="3"/>
<sequence>MQVKDQLSSLQPYKPGKSPEQMKEVYGDHSFVKLASNENPFGCSPRVLDELQKSWLEHALYPDGGATTLRQIIADKLHVKMEQVLCGSGLDEIIQIISRAVLRAGDNIVTAGATFPQYRHHAIIEGCEVKEVALNNGVYDLEEISSVVDNDTKIVWICNPNNPTGTYVNDRKLTQFIEGISENTLIVIDEAYYEYVTAKDFPETLPLLEKHKNILVLRTFSKAYGLASFRVGYAVGQEELIEKLNVVRLPFNVSSLAQKAATIAFGDDEFIEEIVRVNTEGLQQYESFCRENDIPFYPSQTNFIFLPVENAREIYEACAHAGFIIRPFPNGIRITVGTREQNEGVISVLQQHFENKKRKSRDEENA</sequence>
<comment type="catalytic activity">
    <reaction>
        <text>L-histidinol phosphate + 2-oxoglutarate = 3-(imidazol-4-yl)-2-oxopropyl phosphate + L-glutamate</text>
        <dbReference type="Rhea" id="RHEA:23744"/>
        <dbReference type="ChEBI" id="CHEBI:16810"/>
        <dbReference type="ChEBI" id="CHEBI:29985"/>
        <dbReference type="ChEBI" id="CHEBI:57766"/>
        <dbReference type="ChEBI" id="CHEBI:57980"/>
        <dbReference type="EC" id="2.6.1.9"/>
    </reaction>
</comment>
<comment type="cofactor">
    <cofactor evidence="1">
        <name>pyridoxal 5'-phosphate</name>
        <dbReference type="ChEBI" id="CHEBI:597326"/>
    </cofactor>
</comment>
<comment type="pathway">
    <text>Amino-acid biosynthesis; L-histidine biosynthesis; L-histidine from 5-phospho-alpha-D-ribose 1-diphosphate: step 7/9.</text>
</comment>
<comment type="subunit">
    <text evidence="1">Homodimer.</text>
</comment>
<comment type="similarity">
    <text evidence="3">Belongs to the class-II pyridoxal-phosphate-dependent aminotransferase family. Histidinol-phosphate aminotransferase subfamily.</text>
</comment>
<name>HIS82_BACCR</name>
<reference key="1">
    <citation type="journal article" date="2003" name="Nature">
        <title>Genome sequence of Bacillus cereus and comparative analysis with Bacillus anthracis.</title>
        <authorList>
            <person name="Ivanova N."/>
            <person name="Sorokin A."/>
            <person name="Anderson I."/>
            <person name="Galleron N."/>
            <person name="Candelon B."/>
            <person name="Kapatral V."/>
            <person name="Bhattacharyya A."/>
            <person name="Reznik G."/>
            <person name="Mikhailova N."/>
            <person name="Lapidus A."/>
            <person name="Chu L."/>
            <person name="Mazur M."/>
            <person name="Goltsman E."/>
            <person name="Larsen N."/>
            <person name="D'Souza M."/>
            <person name="Walunas T."/>
            <person name="Grechkin Y."/>
            <person name="Pusch G."/>
            <person name="Haselkorn R."/>
            <person name="Fonstein M."/>
            <person name="Ehrlich S.D."/>
            <person name="Overbeek R."/>
            <person name="Kyrpides N.C."/>
        </authorList>
    </citation>
    <scope>NUCLEOTIDE SEQUENCE [LARGE SCALE GENOMIC DNA]</scope>
    <source>
        <strain>ATCC 14579 / DSM 31 / CCUG 7414 / JCM 2152 / NBRC 15305 / NCIMB 9373 / NCTC 2599 / NRRL B-3711</strain>
    </source>
</reference>
<accession>Q81C43</accession>
<protein>
    <recommendedName>
        <fullName>Histidinol-phosphate aminotransferase 2</fullName>
        <ecNumber>2.6.1.9</ecNumber>
    </recommendedName>
    <alternativeName>
        <fullName>Imidazole acetol-phosphate transaminase 2</fullName>
    </alternativeName>
</protein>
<keyword id="KW-0028">Amino-acid biosynthesis</keyword>
<keyword id="KW-0032">Aminotransferase</keyword>
<keyword id="KW-0368">Histidine biosynthesis</keyword>
<keyword id="KW-0663">Pyridoxal phosphate</keyword>
<keyword id="KW-1185">Reference proteome</keyword>
<keyword id="KW-0808">Transferase</keyword>
<organism>
    <name type="scientific">Bacillus cereus (strain ATCC 14579 / DSM 31 / CCUG 7414 / JCM 2152 / NBRC 15305 / NCIMB 9373 / NCTC 2599 / NRRL B-3711)</name>
    <dbReference type="NCBI Taxonomy" id="226900"/>
    <lineage>
        <taxon>Bacteria</taxon>
        <taxon>Bacillati</taxon>
        <taxon>Bacillota</taxon>
        <taxon>Bacilli</taxon>
        <taxon>Bacillales</taxon>
        <taxon>Bacillaceae</taxon>
        <taxon>Bacillus</taxon>
        <taxon>Bacillus cereus group</taxon>
    </lineage>
</organism>
<proteinExistence type="inferred from homology"/>